<protein>
    <recommendedName>
        <fullName evidence="7">Septin and tuftelin-interacting protein 1 homolog 1</fullName>
    </recommendedName>
    <alternativeName>
        <fullName evidence="8">Nineteen complex-related protein 1 homolog</fullName>
        <shortName evidence="8">AtNTR1</shortName>
    </alternativeName>
    <alternativeName>
        <fullName evidence="7">Protein SPLICEOSOMAL TIMEKEEPER LOCUS 1</fullName>
    </alternativeName>
</protein>
<sequence length="849" mass="96884">MDEYQDMERFSMDNDYEGGRWEGDEFVYQKRKEKRKQTKNDATYGIFAESDSDSDDSGGGGSRRKRRKDRDSGRKADLTKPVNFVSTGTVMPNQEIDKDSREHNDEKDRDKIEDNDMIDEDVEVRGGLGIGSSGLGLGFNANGFDDEDNLLPGALGKKIADRAKMRGKAKVEKRGQEGGGAKGGKKNTLGSDIGQFEKSTKGIGMKLLEKMGYKGGGLGKNQQGIVAPIEAQLRPKNMGMGYNDFKEAKLPDLKKVEEKKIIGVSVSENEQSHGDRGGKNLWKKKKVRKAVYVTAEELLEKKQEAGFGGGQTIIDMRGPQVRVVTNLENLDAEEKAKEADVPMPELQHNLRLIVDLVEHEIQKIDRDLRNERESALSLQQEKEMLINEEEKQKRHLENMEYIADEISRIELENTSGNLTLDSLAIRFEDLQTSYPDDYKLCSLSTIACSLALPLFIRMFQGWDPLSDAVHGLKAISSWRKLLEVEEDHNIWVVSTPYSQLVSEVVLPAVRIAGINTWEPRDPEPMLRFLETWETLLPSSVLQTILDTVVLPKLSTAVEYWDPRRELVAIHVWVHPWLPILGQKLEFLYQIIQMKLSNVLDAWHPSDSSAYTILSPWKTVFDTTSWEQLMRRYIVPKLQLALQEFQVNPANQNLERFDWVMKWASAVPIHLMADMMERFFFPKWLDVLYHWLRAKPRFEEIQGWYYGWKELFPQELTANERIRIQLKRGLDMLMEAVEGVEVSQPRAKANERTQSVPAQAQAQAKAQMDSTEVLSLKEVLEVFAQEQELLFKPKPNRMHNGLQIYGFGNVSVIIDSVNQKLLAQKDGGWFLVTPDDLLRMHNNTTVSAKR</sequence>
<name>STIP1_ARATH</name>
<reference key="1">
    <citation type="journal article" date="2000" name="Nature">
        <title>Sequence and analysis of chromosome 1 of the plant Arabidopsis thaliana.</title>
        <authorList>
            <person name="Theologis A."/>
            <person name="Ecker J.R."/>
            <person name="Palm C.J."/>
            <person name="Federspiel N.A."/>
            <person name="Kaul S."/>
            <person name="White O."/>
            <person name="Alonso J."/>
            <person name="Altafi H."/>
            <person name="Araujo R."/>
            <person name="Bowman C.L."/>
            <person name="Brooks S.Y."/>
            <person name="Buehler E."/>
            <person name="Chan A."/>
            <person name="Chao Q."/>
            <person name="Chen H."/>
            <person name="Cheuk R.F."/>
            <person name="Chin C.W."/>
            <person name="Chung M.K."/>
            <person name="Conn L."/>
            <person name="Conway A.B."/>
            <person name="Conway A.R."/>
            <person name="Creasy T.H."/>
            <person name="Dewar K."/>
            <person name="Dunn P."/>
            <person name="Etgu P."/>
            <person name="Feldblyum T.V."/>
            <person name="Feng J.-D."/>
            <person name="Fong B."/>
            <person name="Fujii C.Y."/>
            <person name="Gill J.E."/>
            <person name="Goldsmith A.D."/>
            <person name="Haas B."/>
            <person name="Hansen N.F."/>
            <person name="Hughes B."/>
            <person name="Huizar L."/>
            <person name="Hunter J.L."/>
            <person name="Jenkins J."/>
            <person name="Johnson-Hopson C."/>
            <person name="Khan S."/>
            <person name="Khaykin E."/>
            <person name="Kim C.J."/>
            <person name="Koo H.L."/>
            <person name="Kremenetskaia I."/>
            <person name="Kurtz D.B."/>
            <person name="Kwan A."/>
            <person name="Lam B."/>
            <person name="Langin-Hooper S."/>
            <person name="Lee A."/>
            <person name="Lee J.M."/>
            <person name="Lenz C.A."/>
            <person name="Li J.H."/>
            <person name="Li Y.-P."/>
            <person name="Lin X."/>
            <person name="Liu S.X."/>
            <person name="Liu Z.A."/>
            <person name="Luros J.S."/>
            <person name="Maiti R."/>
            <person name="Marziali A."/>
            <person name="Militscher J."/>
            <person name="Miranda M."/>
            <person name="Nguyen M."/>
            <person name="Nierman W.C."/>
            <person name="Osborne B.I."/>
            <person name="Pai G."/>
            <person name="Peterson J."/>
            <person name="Pham P.K."/>
            <person name="Rizzo M."/>
            <person name="Rooney T."/>
            <person name="Rowley D."/>
            <person name="Sakano H."/>
            <person name="Salzberg S.L."/>
            <person name="Schwartz J.R."/>
            <person name="Shinn P."/>
            <person name="Southwick A.M."/>
            <person name="Sun H."/>
            <person name="Tallon L.J."/>
            <person name="Tambunga G."/>
            <person name="Toriumi M.J."/>
            <person name="Town C.D."/>
            <person name="Utterback T."/>
            <person name="Van Aken S."/>
            <person name="Vaysberg M."/>
            <person name="Vysotskaia V.S."/>
            <person name="Walker M."/>
            <person name="Wu D."/>
            <person name="Yu G."/>
            <person name="Fraser C.M."/>
            <person name="Venter J.C."/>
            <person name="Davis R.W."/>
        </authorList>
    </citation>
    <scope>NUCLEOTIDE SEQUENCE [LARGE SCALE GENOMIC DNA]</scope>
    <source>
        <strain>cv. Columbia</strain>
    </source>
</reference>
<reference key="2">
    <citation type="journal article" date="2017" name="Plant J.">
        <title>Araport11: a complete reannotation of the Arabidopsis thaliana reference genome.</title>
        <authorList>
            <person name="Cheng C.Y."/>
            <person name="Krishnakumar V."/>
            <person name="Chan A.P."/>
            <person name="Thibaud-Nissen F."/>
            <person name="Schobel S."/>
            <person name="Town C.D."/>
        </authorList>
    </citation>
    <scope>GENOME REANNOTATION</scope>
    <source>
        <strain>cv. Columbia</strain>
    </source>
</reference>
<reference key="3">
    <citation type="submission" date="2006-07" db="EMBL/GenBank/DDBJ databases">
        <title>Large-scale analysis of RIKEN Arabidopsis full-length (RAFL) cDNAs.</title>
        <authorList>
            <person name="Totoki Y."/>
            <person name="Seki M."/>
            <person name="Ishida J."/>
            <person name="Nakajima M."/>
            <person name="Enju A."/>
            <person name="Kamiya A."/>
            <person name="Narusaka M."/>
            <person name="Shin-i T."/>
            <person name="Nakagawa M."/>
            <person name="Sakamoto N."/>
            <person name="Oishi K."/>
            <person name="Kohara Y."/>
            <person name="Kobayashi M."/>
            <person name="Toyoda A."/>
            <person name="Sakaki Y."/>
            <person name="Sakurai T."/>
            <person name="Iida K."/>
            <person name="Akiyama K."/>
            <person name="Satou M."/>
            <person name="Toyoda T."/>
            <person name="Konagaya A."/>
            <person name="Carninci P."/>
            <person name="Kawai J."/>
            <person name="Hayashizaki Y."/>
            <person name="Shinozaki K."/>
        </authorList>
    </citation>
    <scope>NUCLEOTIDE SEQUENCE [LARGE SCALE MRNA]</scope>
    <source>
        <strain>cv. Columbia</strain>
    </source>
</reference>
<reference key="4">
    <citation type="submission" date="2002-03" db="EMBL/GenBank/DDBJ databases">
        <title>Full-length cDNA from Arabidopsis thaliana.</title>
        <authorList>
            <person name="Brover V.V."/>
            <person name="Troukhan M.E."/>
            <person name="Alexandrov N.A."/>
            <person name="Lu Y.-P."/>
            <person name="Flavell R.B."/>
            <person name="Feldmann K.A."/>
        </authorList>
    </citation>
    <scope>NUCLEOTIDE SEQUENCE [LARGE SCALE MRNA] OF 704-849</scope>
</reference>
<reference key="5">
    <citation type="journal article" date="2012" name="Plant Cell">
        <title>Mutation of Arabidopsis spliceosomal timekeeper locus1 causes circadian clock defects.</title>
        <authorList>
            <person name="Jones M.A."/>
            <person name="Williams B.A."/>
            <person name="McNicol J."/>
            <person name="Simpson C.G."/>
            <person name="Brown J.W."/>
            <person name="Harmer S.L."/>
        </authorList>
    </citation>
    <scope>FUNCTION</scope>
    <scope>SUBCELLULAR LOCATION</scope>
    <scope>DISRUPTION PHENOTYPE</scope>
</reference>
<reference key="6">
    <citation type="journal article" date="2015" name="EMBO J.">
        <title>NTR1 is required for transcription elongation checkpoints at alternative exons in Arabidopsis.</title>
        <authorList>
            <person name="Dolata J."/>
            <person name="Guo Y."/>
            <person name="Kolowerzo A."/>
            <person name="Smolinski D."/>
            <person name="Brzyzek G."/>
            <person name="Jarmolowski A."/>
            <person name="Swiezewski S."/>
        </authorList>
    </citation>
    <scope>FUNCTION</scope>
    <scope>INTERACTION WITH ILP1</scope>
    <scope>SUBCELLULAR LOCATION</scope>
</reference>
<evidence type="ECO:0000250" key="1">
    <source>
        <dbReference type="UniProtKB" id="Q9UBB9"/>
    </source>
</evidence>
<evidence type="ECO:0000255" key="2"/>
<evidence type="ECO:0000255" key="3">
    <source>
        <dbReference type="PROSITE-ProRule" id="PRU00092"/>
    </source>
</evidence>
<evidence type="ECO:0000256" key="4">
    <source>
        <dbReference type="SAM" id="MobiDB-lite"/>
    </source>
</evidence>
<evidence type="ECO:0000269" key="5">
    <source>
    </source>
</evidence>
<evidence type="ECO:0000269" key="6">
    <source>
    </source>
</evidence>
<evidence type="ECO:0000303" key="7">
    <source>
    </source>
</evidence>
<evidence type="ECO:0000303" key="8">
    <source>
    </source>
</evidence>
<evidence type="ECO:0000305" key="9"/>
<evidence type="ECO:0000312" key="10">
    <source>
        <dbReference type="Araport" id="AT1G17070"/>
    </source>
</evidence>
<evidence type="ECO:0000312" key="11">
    <source>
        <dbReference type="EMBL" id="AAD50023.1"/>
    </source>
</evidence>
<accession>Q9SHG6</accession>
<accession>Q56W84</accession>
<accession>Q8LEM9</accession>
<gene>
    <name evidence="7" type="primary">STIPL1</name>
    <name evidence="8" type="synonym">NTR1</name>
    <name evidence="10" type="ordered locus">At1g17070</name>
    <name evidence="11" type="ORF">F20D23.23</name>
</gene>
<feature type="chain" id="PRO_0000429430" description="Septin and tuftelin-interacting protein 1 homolog 1">
    <location>
        <begin position="1"/>
        <end position="849"/>
    </location>
</feature>
<feature type="domain" description="G-patch" evidence="3">
    <location>
        <begin position="200"/>
        <end position="245"/>
    </location>
</feature>
<feature type="region of interest" description="Disordered" evidence="4">
    <location>
        <begin position="1"/>
        <end position="118"/>
    </location>
</feature>
<feature type="region of interest" description="Disordered" evidence="4">
    <location>
        <begin position="167"/>
        <end position="193"/>
    </location>
</feature>
<feature type="coiled-coil region" evidence="2">
    <location>
        <begin position="354"/>
        <end position="401"/>
    </location>
</feature>
<feature type="short sequence motif" description="Nuclear localization signal" evidence="2">
    <location>
        <begin position="60"/>
        <end position="75"/>
    </location>
</feature>
<feature type="short sequence motif" description="Nuclear localization signal" evidence="2">
    <location>
        <begin position="156"/>
        <end position="186"/>
    </location>
</feature>
<feature type="compositionally biased region" description="Basic and acidic residues" evidence="4">
    <location>
        <begin position="1"/>
        <end position="30"/>
    </location>
</feature>
<feature type="compositionally biased region" description="Basic and acidic residues" evidence="4">
    <location>
        <begin position="69"/>
        <end position="78"/>
    </location>
</feature>
<feature type="compositionally biased region" description="Basic and acidic residues" evidence="4">
    <location>
        <begin position="95"/>
        <end position="114"/>
    </location>
</feature>
<feature type="compositionally biased region" description="Basic and acidic residues" evidence="4">
    <location>
        <begin position="167"/>
        <end position="176"/>
    </location>
</feature>
<organism>
    <name type="scientific">Arabidopsis thaliana</name>
    <name type="common">Mouse-ear cress</name>
    <dbReference type="NCBI Taxonomy" id="3702"/>
    <lineage>
        <taxon>Eukaryota</taxon>
        <taxon>Viridiplantae</taxon>
        <taxon>Streptophyta</taxon>
        <taxon>Embryophyta</taxon>
        <taxon>Tracheophyta</taxon>
        <taxon>Spermatophyta</taxon>
        <taxon>Magnoliopsida</taxon>
        <taxon>eudicotyledons</taxon>
        <taxon>Gunneridae</taxon>
        <taxon>Pentapetalae</taxon>
        <taxon>rosids</taxon>
        <taxon>malvids</taxon>
        <taxon>Brassicales</taxon>
        <taxon>Brassicaceae</taxon>
        <taxon>Camelineae</taxon>
        <taxon>Arabidopsis</taxon>
    </lineage>
</organism>
<proteinExistence type="evidence at protein level"/>
<comment type="function">
    <text evidence="1 5 6">Involved in pre-mRNA splicing, specifically in spliceosome disassembly during late-stage splicing events (By similarity). Involved in snRNPs recycling (PubMed:25568310). Required for efficient splicing of genes that act within the plant circadian clock (PubMed:23110899). Part of a transcription elongation checkpoint at alternative exons (PubMed:25568310). Required for correct expression and splicing of DOG1, a regulator of seed dormancy (PubMed:25568310). May induce transient transcriptional pausing of polymerase II at slices sites (PubMed:25568310).</text>
</comment>
<comment type="subunit">
    <text evidence="1 6">Identified in the spliceosome C complex (By similarity). Interacts with ILP1 (PubMed:25568310).</text>
</comment>
<comment type="subcellular location">
    <subcellularLocation>
        <location evidence="5 6">Nucleus</location>
    </subcellularLocation>
    <text evidence="6">Excluded from the nucleolus. Co-localizes with polymerase II.</text>
</comment>
<comment type="disruption phenotype">
    <text evidence="5">Long circadian-period phenotype under free-running conditions.</text>
</comment>
<comment type="miscellaneous">
    <text evidence="6">Physically located at the target splice sites.</text>
</comment>
<comment type="similarity">
    <text evidence="9">Belongs to the TFP11/STIP family.</text>
</comment>
<comment type="sequence caution" evidence="9">
    <conflict type="erroneous initiation">
        <sequence resource="EMBL-CDS" id="AAM62572"/>
    </conflict>
    <text>Truncated N-terminus.</text>
</comment>
<comment type="sequence caution" evidence="9">
    <conflict type="frameshift">
        <sequence resource="EMBL" id="AK228772"/>
    </conflict>
</comment>
<comment type="sequence caution" evidence="9">
    <conflict type="erroneous initiation">
        <sequence resource="EMBL-CDS" id="BAD95266"/>
    </conflict>
    <text>Truncated N-terminus.</text>
</comment>
<keyword id="KW-0175">Coiled coil</keyword>
<keyword id="KW-0238">DNA-binding</keyword>
<keyword id="KW-0507">mRNA processing</keyword>
<keyword id="KW-0508">mRNA splicing</keyword>
<keyword id="KW-0539">Nucleus</keyword>
<keyword id="KW-1185">Reference proteome</keyword>
<keyword id="KW-0747">Spliceosome</keyword>
<dbReference type="EMBL" id="AC007651">
    <property type="protein sequence ID" value="AAD50023.1"/>
    <property type="molecule type" value="Genomic_DNA"/>
</dbReference>
<dbReference type="EMBL" id="CP002684">
    <property type="protein sequence ID" value="AEE29537.1"/>
    <property type="molecule type" value="Genomic_DNA"/>
</dbReference>
<dbReference type="EMBL" id="AK222163">
    <property type="protein sequence ID" value="BAD95266.1"/>
    <property type="status" value="ALT_INIT"/>
    <property type="molecule type" value="mRNA"/>
</dbReference>
<dbReference type="EMBL" id="AK228772">
    <property type="status" value="NOT_ANNOTATED_CDS"/>
    <property type="molecule type" value="mRNA"/>
</dbReference>
<dbReference type="EMBL" id="AY085341">
    <property type="protein sequence ID" value="AAM62572.1"/>
    <property type="status" value="ALT_INIT"/>
    <property type="molecule type" value="mRNA"/>
</dbReference>
<dbReference type="PIR" id="E86306">
    <property type="entry name" value="E86306"/>
</dbReference>
<dbReference type="RefSeq" id="NP_173150.1">
    <property type="nucleotide sequence ID" value="NM_101567.3"/>
</dbReference>
<dbReference type="SMR" id="Q9SHG6"/>
<dbReference type="FunCoup" id="Q9SHG6">
    <property type="interactions" value="4206"/>
</dbReference>
<dbReference type="STRING" id="3702.Q9SHG6"/>
<dbReference type="PaxDb" id="3702-AT1G17070.1"/>
<dbReference type="ProteomicsDB" id="228421"/>
<dbReference type="EnsemblPlants" id="AT1G17070.1">
    <property type="protein sequence ID" value="AT1G17070.1"/>
    <property type="gene ID" value="AT1G17070"/>
</dbReference>
<dbReference type="GeneID" id="838277"/>
<dbReference type="Gramene" id="AT1G17070.1">
    <property type="protein sequence ID" value="AT1G17070.1"/>
    <property type="gene ID" value="AT1G17070"/>
</dbReference>
<dbReference type="KEGG" id="ath:AT1G17070"/>
<dbReference type="Araport" id="AT1G17070"/>
<dbReference type="TAIR" id="AT1G17070">
    <property type="gene designation" value="STIPL1"/>
</dbReference>
<dbReference type="eggNOG" id="KOG2184">
    <property type="taxonomic scope" value="Eukaryota"/>
</dbReference>
<dbReference type="HOGENOM" id="CLU_007977_1_0_1"/>
<dbReference type="InParanoid" id="Q9SHG6"/>
<dbReference type="OMA" id="CEQDIIQ"/>
<dbReference type="PhylomeDB" id="Q9SHG6"/>
<dbReference type="PRO" id="PR:Q9SHG6"/>
<dbReference type="Proteomes" id="UP000006548">
    <property type="component" value="Chromosome 1"/>
</dbReference>
<dbReference type="ExpressionAtlas" id="Q9SHG6">
    <property type="expression patterns" value="baseline and differential"/>
</dbReference>
<dbReference type="GO" id="GO:0031981">
    <property type="term" value="C:nuclear lumen"/>
    <property type="evidence" value="ECO:0000314"/>
    <property type="project" value="TAIR"/>
</dbReference>
<dbReference type="GO" id="GO:0005681">
    <property type="term" value="C:spliceosomal complex"/>
    <property type="evidence" value="ECO:0007669"/>
    <property type="project" value="UniProtKB-KW"/>
</dbReference>
<dbReference type="GO" id="GO:0003677">
    <property type="term" value="F:DNA binding"/>
    <property type="evidence" value="ECO:0007669"/>
    <property type="project" value="UniProtKB-KW"/>
</dbReference>
<dbReference type="GO" id="GO:1990446">
    <property type="term" value="F:U1 snRNP binding"/>
    <property type="evidence" value="ECO:0000314"/>
    <property type="project" value="TAIR"/>
</dbReference>
<dbReference type="GO" id="GO:0000398">
    <property type="term" value="P:mRNA splicing, via spliceosome"/>
    <property type="evidence" value="ECO:0000315"/>
    <property type="project" value="TAIR"/>
</dbReference>
<dbReference type="GO" id="GO:0042752">
    <property type="term" value="P:regulation of circadian rhythm"/>
    <property type="evidence" value="ECO:0000315"/>
    <property type="project" value="TAIR"/>
</dbReference>
<dbReference type="GO" id="GO:0000390">
    <property type="term" value="P:spliceosomal complex disassembly"/>
    <property type="evidence" value="ECO:0007669"/>
    <property type="project" value="InterPro"/>
</dbReference>
<dbReference type="InterPro" id="IPR000467">
    <property type="entry name" value="G_patch_dom"/>
</dbReference>
<dbReference type="InterPro" id="IPR022783">
    <property type="entry name" value="GCFC_dom"/>
</dbReference>
<dbReference type="InterPro" id="IPR022159">
    <property type="entry name" value="STIP/TFIP11_N"/>
</dbReference>
<dbReference type="InterPro" id="IPR024933">
    <property type="entry name" value="TFP11"/>
</dbReference>
<dbReference type="InterPro" id="IPR045211">
    <property type="entry name" value="TFP11/STIP/Ntr1"/>
</dbReference>
<dbReference type="PANTHER" id="PTHR23329:SF1">
    <property type="entry name" value="TUFTELIN-INTERACTING PROTEIN 11"/>
    <property type="match status" value="1"/>
</dbReference>
<dbReference type="PANTHER" id="PTHR23329">
    <property type="entry name" value="TUFTELIN-INTERACTING PROTEIN 11-RELATED"/>
    <property type="match status" value="1"/>
</dbReference>
<dbReference type="Pfam" id="PF01585">
    <property type="entry name" value="G-patch"/>
    <property type="match status" value="1"/>
</dbReference>
<dbReference type="Pfam" id="PF07842">
    <property type="entry name" value="GCFC"/>
    <property type="match status" value="1"/>
</dbReference>
<dbReference type="Pfam" id="PF12457">
    <property type="entry name" value="TIP_N"/>
    <property type="match status" value="1"/>
</dbReference>
<dbReference type="PIRSF" id="PIRSF017706">
    <property type="entry name" value="TFIP11"/>
    <property type="match status" value="1"/>
</dbReference>
<dbReference type="SMART" id="SM00443">
    <property type="entry name" value="G_patch"/>
    <property type="match status" value="1"/>
</dbReference>
<dbReference type="PROSITE" id="PS50174">
    <property type="entry name" value="G_PATCH"/>
    <property type="match status" value="1"/>
</dbReference>